<dbReference type="EC" id="4.2.1.9" evidence="1"/>
<dbReference type="EMBL" id="CP000551">
    <property type="protein sequence ID" value="ABM70120.1"/>
    <property type="molecule type" value="Genomic_DNA"/>
</dbReference>
<dbReference type="RefSeq" id="WP_011818279.1">
    <property type="nucleotide sequence ID" value="NC_008816.1"/>
</dbReference>
<dbReference type="SMR" id="A2BQQ9"/>
<dbReference type="STRING" id="146891.A9601_08361"/>
<dbReference type="KEGG" id="pmb:A9601_08361"/>
<dbReference type="eggNOG" id="COG0129">
    <property type="taxonomic scope" value="Bacteria"/>
</dbReference>
<dbReference type="HOGENOM" id="CLU_014271_4_2_3"/>
<dbReference type="OrthoDB" id="9807077at2"/>
<dbReference type="UniPathway" id="UPA00047">
    <property type="reaction ID" value="UER00057"/>
</dbReference>
<dbReference type="UniPathway" id="UPA00049">
    <property type="reaction ID" value="UER00061"/>
</dbReference>
<dbReference type="Proteomes" id="UP000002590">
    <property type="component" value="Chromosome"/>
</dbReference>
<dbReference type="GO" id="GO:0051537">
    <property type="term" value="F:2 iron, 2 sulfur cluster binding"/>
    <property type="evidence" value="ECO:0007669"/>
    <property type="project" value="UniProtKB-UniRule"/>
</dbReference>
<dbReference type="GO" id="GO:0004160">
    <property type="term" value="F:dihydroxy-acid dehydratase activity"/>
    <property type="evidence" value="ECO:0007669"/>
    <property type="project" value="UniProtKB-UniRule"/>
</dbReference>
<dbReference type="GO" id="GO:0000287">
    <property type="term" value="F:magnesium ion binding"/>
    <property type="evidence" value="ECO:0007669"/>
    <property type="project" value="UniProtKB-UniRule"/>
</dbReference>
<dbReference type="GO" id="GO:0009097">
    <property type="term" value="P:isoleucine biosynthetic process"/>
    <property type="evidence" value="ECO:0007669"/>
    <property type="project" value="UniProtKB-UniRule"/>
</dbReference>
<dbReference type="GO" id="GO:0009099">
    <property type="term" value="P:L-valine biosynthetic process"/>
    <property type="evidence" value="ECO:0007669"/>
    <property type="project" value="UniProtKB-UniRule"/>
</dbReference>
<dbReference type="FunFam" id="3.50.30.80:FF:000001">
    <property type="entry name" value="Dihydroxy-acid dehydratase"/>
    <property type="match status" value="1"/>
</dbReference>
<dbReference type="Gene3D" id="3.50.30.80">
    <property type="entry name" value="IlvD/EDD C-terminal domain-like"/>
    <property type="match status" value="1"/>
</dbReference>
<dbReference type="HAMAP" id="MF_00012">
    <property type="entry name" value="IlvD"/>
    <property type="match status" value="1"/>
</dbReference>
<dbReference type="InterPro" id="IPR050165">
    <property type="entry name" value="DHAD_IlvD/Edd"/>
</dbReference>
<dbReference type="InterPro" id="IPR042096">
    <property type="entry name" value="Dihydro-acid_dehy_C"/>
</dbReference>
<dbReference type="InterPro" id="IPR004404">
    <property type="entry name" value="DihydroxyA_deHydtase"/>
</dbReference>
<dbReference type="InterPro" id="IPR020558">
    <property type="entry name" value="DiOHA_6PGluconate_deHydtase_CS"/>
</dbReference>
<dbReference type="InterPro" id="IPR056740">
    <property type="entry name" value="ILV_EDD_C"/>
</dbReference>
<dbReference type="InterPro" id="IPR000581">
    <property type="entry name" value="ILV_EDD_N"/>
</dbReference>
<dbReference type="InterPro" id="IPR037237">
    <property type="entry name" value="IlvD/EDD_N"/>
</dbReference>
<dbReference type="NCBIfam" id="TIGR00110">
    <property type="entry name" value="ilvD"/>
    <property type="match status" value="1"/>
</dbReference>
<dbReference type="NCBIfam" id="NF002068">
    <property type="entry name" value="PRK00911.1"/>
    <property type="match status" value="1"/>
</dbReference>
<dbReference type="PANTHER" id="PTHR21000">
    <property type="entry name" value="DIHYDROXY-ACID DEHYDRATASE DAD"/>
    <property type="match status" value="1"/>
</dbReference>
<dbReference type="PANTHER" id="PTHR21000:SF5">
    <property type="entry name" value="DIHYDROXY-ACID DEHYDRATASE, MITOCHONDRIAL"/>
    <property type="match status" value="1"/>
</dbReference>
<dbReference type="Pfam" id="PF24877">
    <property type="entry name" value="ILV_EDD_C"/>
    <property type="match status" value="1"/>
</dbReference>
<dbReference type="Pfam" id="PF00920">
    <property type="entry name" value="ILVD_EDD_N"/>
    <property type="match status" value="1"/>
</dbReference>
<dbReference type="SUPFAM" id="SSF143975">
    <property type="entry name" value="IlvD/EDD N-terminal domain-like"/>
    <property type="match status" value="1"/>
</dbReference>
<dbReference type="SUPFAM" id="SSF52016">
    <property type="entry name" value="LeuD/IlvD-like"/>
    <property type="match status" value="1"/>
</dbReference>
<dbReference type="PROSITE" id="PS00886">
    <property type="entry name" value="ILVD_EDD_1"/>
    <property type="match status" value="1"/>
</dbReference>
<dbReference type="PROSITE" id="PS00887">
    <property type="entry name" value="ILVD_EDD_2"/>
    <property type="match status" value="1"/>
</dbReference>
<name>ILVD_PROMS</name>
<protein>
    <recommendedName>
        <fullName evidence="1">Dihydroxy-acid dehydratase</fullName>
        <shortName evidence="1">DAD</shortName>
        <ecNumber evidence="1">4.2.1.9</ecNumber>
    </recommendedName>
</protein>
<organism>
    <name type="scientific">Prochlorococcus marinus (strain AS9601)</name>
    <dbReference type="NCBI Taxonomy" id="146891"/>
    <lineage>
        <taxon>Bacteria</taxon>
        <taxon>Bacillati</taxon>
        <taxon>Cyanobacteriota</taxon>
        <taxon>Cyanophyceae</taxon>
        <taxon>Synechococcales</taxon>
        <taxon>Prochlorococcaceae</taxon>
        <taxon>Prochlorococcus</taxon>
    </lineage>
</organism>
<gene>
    <name evidence="1" type="primary">ilvD</name>
    <name type="ordered locus">A9601_08361</name>
</gene>
<reference key="1">
    <citation type="journal article" date="2007" name="PLoS Genet.">
        <title>Patterns and implications of gene gain and loss in the evolution of Prochlorococcus.</title>
        <authorList>
            <person name="Kettler G.C."/>
            <person name="Martiny A.C."/>
            <person name="Huang K."/>
            <person name="Zucker J."/>
            <person name="Coleman M.L."/>
            <person name="Rodrigue S."/>
            <person name="Chen F."/>
            <person name="Lapidus A."/>
            <person name="Ferriera S."/>
            <person name="Johnson J."/>
            <person name="Steglich C."/>
            <person name="Church G.M."/>
            <person name="Richardson P."/>
            <person name="Chisholm S.W."/>
        </authorList>
    </citation>
    <scope>NUCLEOTIDE SEQUENCE [LARGE SCALE GENOMIC DNA]</scope>
    <source>
        <strain>AS9601</strain>
    </source>
</reference>
<accession>A2BQQ9</accession>
<feature type="chain" id="PRO_1000001031" description="Dihydroxy-acid dehydratase">
    <location>
        <begin position="1"/>
        <end position="557"/>
    </location>
</feature>
<feature type="active site" description="Proton acceptor" evidence="1">
    <location>
        <position position="472"/>
    </location>
</feature>
<feature type="binding site" evidence="1">
    <location>
        <position position="49"/>
    </location>
    <ligand>
        <name>[2Fe-2S] cluster</name>
        <dbReference type="ChEBI" id="CHEBI:190135"/>
    </ligand>
</feature>
<feature type="binding site" evidence="1">
    <location>
        <position position="81"/>
    </location>
    <ligand>
        <name>Mg(2+)</name>
        <dbReference type="ChEBI" id="CHEBI:18420"/>
    </ligand>
</feature>
<feature type="binding site" evidence="1">
    <location>
        <position position="122"/>
    </location>
    <ligand>
        <name>[2Fe-2S] cluster</name>
        <dbReference type="ChEBI" id="CHEBI:190135"/>
    </ligand>
</feature>
<feature type="binding site" evidence="1">
    <location>
        <position position="123"/>
    </location>
    <ligand>
        <name>Mg(2+)</name>
        <dbReference type="ChEBI" id="CHEBI:18420"/>
    </ligand>
</feature>
<feature type="binding site" description="via carbamate group" evidence="1">
    <location>
        <position position="124"/>
    </location>
    <ligand>
        <name>Mg(2+)</name>
        <dbReference type="ChEBI" id="CHEBI:18420"/>
    </ligand>
</feature>
<feature type="binding site" evidence="1">
    <location>
        <position position="194"/>
    </location>
    <ligand>
        <name>[2Fe-2S] cluster</name>
        <dbReference type="ChEBI" id="CHEBI:190135"/>
    </ligand>
</feature>
<feature type="binding site" evidence="1">
    <location>
        <position position="446"/>
    </location>
    <ligand>
        <name>Mg(2+)</name>
        <dbReference type="ChEBI" id="CHEBI:18420"/>
    </ligand>
</feature>
<feature type="modified residue" description="N6-carboxylysine" evidence="1">
    <location>
        <position position="124"/>
    </location>
</feature>
<evidence type="ECO:0000255" key="1">
    <source>
        <dbReference type="HAMAP-Rule" id="MF_00012"/>
    </source>
</evidence>
<comment type="function">
    <text evidence="1">Functions in the biosynthesis of branched-chain amino acids. Catalyzes the dehydration of (2R,3R)-2,3-dihydroxy-3-methylpentanoate (2,3-dihydroxy-3-methylvalerate) into 2-oxo-3-methylpentanoate (2-oxo-3-methylvalerate) and of (2R)-2,3-dihydroxy-3-methylbutanoate (2,3-dihydroxyisovalerate) into 2-oxo-3-methylbutanoate (2-oxoisovalerate), the penultimate precursor to L-isoleucine and L-valine, respectively.</text>
</comment>
<comment type="catalytic activity">
    <reaction evidence="1">
        <text>(2R)-2,3-dihydroxy-3-methylbutanoate = 3-methyl-2-oxobutanoate + H2O</text>
        <dbReference type="Rhea" id="RHEA:24809"/>
        <dbReference type="ChEBI" id="CHEBI:11851"/>
        <dbReference type="ChEBI" id="CHEBI:15377"/>
        <dbReference type="ChEBI" id="CHEBI:49072"/>
        <dbReference type="EC" id="4.2.1.9"/>
    </reaction>
    <physiologicalReaction direction="left-to-right" evidence="1">
        <dbReference type="Rhea" id="RHEA:24810"/>
    </physiologicalReaction>
</comment>
<comment type="catalytic activity">
    <reaction evidence="1">
        <text>(2R,3R)-2,3-dihydroxy-3-methylpentanoate = (S)-3-methyl-2-oxopentanoate + H2O</text>
        <dbReference type="Rhea" id="RHEA:27694"/>
        <dbReference type="ChEBI" id="CHEBI:15377"/>
        <dbReference type="ChEBI" id="CHEBI:35146"/>
        <dbReference type="ChEBI" id="CHEBI:49258"/>
        <dbReference type="EC" id="4.2.1.9"/>
    </reaction>
    <physiologicalReaction direction="left-to-right" evidence="1">
        <dbReference type="Rhea" id="RHEA:27695"/>
    </physiologicalReaction>
</comment>
<comment type="cofactor">
    <cofactor evidence="1">
        <name>[2Fe-2S] cluster</name>
        <dbReference type="ChEBI" id="CHEBI:190135"/>
    </cofactor>
    <text evidence="1">Binds 1 [2Fe-2S] cluster per subunit. This cluster acts as a Lewis acid cofactor.</text>
</comment>
<comment type="cofactor">
    <cofactor evidence="1">
        <name>Mg(2+)</name>
        <dbReference type="ChEBI" id="CHEBI:18420"/>
    </cofactor>
</comment>
<comment type="pathway">
    <text evidence="1">Amino-acid biosynthesis; L-isoleucine biosynthesis; L-isoleucine from 2-oxobutanoate: step 3/4.</text>
</comment>
<comment type="pathway">
    <text evidence="1">Amino-acid biosynthesis; L-valine biosynthesis; L-valine from pyruvate: step 3/4.</text>
</comment>
<comment type="subunit">
    <text evidence="1">Homodimer.</text>
</comment>
<comment type="similarity">
    <text evidence="1">Belongs to the IlvD/Edd family.</text>
</comment>
<proteinExistence type="inferred from homology"/>
<sequence>MNKLRSSAITQGVQRSPNRSMLRAVGFNDEDFNKPIIGVANGYSTITPCNMGLNKLALKAEESIKRSGGMPQMFGTITVSDGISMGTEGMKYSLVSREVIADSIETACNAQSMDGVLAIGGCDKNMPGAMIAIARMNIPSIFIYGGTIKPGKLHGEDLTVVSAFEAVGQLTSGKINEERLIQVEKNCIPGAGSCGGMFTANTMSAVIEVLGLSLPHSSTMAAEDLEKELSADKSAEILVSAIEKDIRPLDLMTKKAFENAISVIMAIGGSTNAVLHILAIANTAGIDININDFERIRQKVPVICDLKPSGKYVTVDLHKAGGIPQVMKILLNAGLIHGDCKNIEGKTISEYLQNIPDKPPTNQNVIRDIDNPLYKKGHLAILKGNLASEGSVAKISGVKNPVLTGPAKIFESEEDCLKSILNNDIKAGDVVVIRNEGPVGGPGMREMLAPTSAIVGQGLGEKVALITDGRFSGGTYGLVVGHIAPEAAVGGNIALIKQGDLITVDAVKQLIEVDLSDEELEKRKKDWVKPIQKYKRGILSKYSRIVSTSSLGAVTDL</sequence>
<keyword id="KW-0001">2Fe-2S</keyword>
<keyword id="KW-0028">Amino-acid biosynthesis</keyword>
<keyword id="KW-0100">Branched-chain amino acid biosynthesis</keyword>
<keyword id="KW-0408">Iron</keyword>
<keyword id="KW-0411">Iron-sulfur</keyword>
<keyword id="KW-0456">Lyase</keyword>
<keyword id="KW-0460">Magnesium</keyword>
<keyword id="KW-0479">Metal-binding</keyword>